<feature type="chain" id="PRO_1000019706" description="Serine--tRNA ligase">
    <location>
        <begin position="1"/>
        <end position="423"/>
    </location>
</feature>
<feature type="binding site" evidence="1">
    <location>
        <begin position="230"/>
        <end position="232"/>
    </location>
    <ligand>
        <name>L-serine</name>
        <dbReference type="ChEBI" id="CHEBI:33384"/>
    </ligand>
</feature>
<feature type="binding site" evidence="1">
    <location>
        <begin position="261"/>
        <end position="263"/>
    </location>
    <ligand>
        <name>ATP</name>
        <dbReference type="ChEBI" id="CHEBI:30616"/>
    </ligand>
</feature>
<feature type="binding site" evidence="1">
    <location>
        <position position="284"/>
    </location>
    <ligand>
        <name>L-serine</name>
        <dbReference type="ChEBI" id="CHEBI:33384"/>
    </ligand>
</feature>
<feature type="binding site" evidence="1">
    <location>
        <begin position="348"/>
        <end position="351"/>
    </location>
    <ligand>
        <name>ATP</name>
        <dbReference type="ChEBI" id="CHEBI:30616"/>
    </ligand>
</feature>
<feature type="binding site" evidence="1">
    <location>
        <position position="383"/>
    </location>
    <ligand>
        <name>L-serine</name>
        <dbReference type="ChEBI" id="CHEBI:33384"/>
    </ligand>
</feature>
<proteinExistence type="inferred from homology"/>
<protein>
    <recommendedName>
        <fullName evidence="1">Serine--tRNA ligase</fullName>
        <ecNumber evidence="1">6.1.1.11</ecNumber>
    </recommendedName>
    <alternativeName>
        <fullName evidence="1">Seryl-tRNA synthetase</fullName>
        <shortName evidence="1">SerRS</shortName>
    </alternativeName>
    <alternativeName>
        <fullName evidence="1">Seryl-tRNA(Ser/Sec) synthetase</fullName>
    </alternativeName>
</protein>
<sequence>MLDLKLIRQEPDFIKEKLATRGVDPADIDALLELDAKRRELIVKSETMKAQRNTVSDEISQLKRNKEDADDKIKEMRQVSADIKDIDAQLDTLKDQVQDAAAHLPNIPNDNVPVGLTEDGSVELRQWGEKPNMDFTPKAHYEIGEDLGILDFEAGAKVSGSRYLYYLGAGARLERAVYNFFLDENTKAGFKEVLPPYIVNDDSMYGTGQFPKFKEDVYQLKDEAMTLIPTAEVPLVNYYRDEVIPEEELPVWFTALTPAFRSEAGSAGRDTRGLIRLHQFNKVEMVKFCKPENSWAELEALTKHAESLLQKLGLAYHVITLTTSDMSFTAAMTHDLEVWFPEQQTYREISSCSNTTDFQARRAHIQYRDENGKLQYVHALNGSGLAVGRAVAAILENYQNADGSVTIPDVLVPYMGGLTKITK</sequence>
<organism>
    <name type="scientific">Levilactobacillus brevis (strain ATCC 367 / BCRC 12310 / CIP 105137 / JCM 1170 / LMG 11437 / NCIMB 947 / NCTC 947)</name>
    <name type="common">Lactobacillus brevis</name>
    <dbReference type="NCBI Taxonomy" id="387344"/>
    <lineage>
        <taxon>Bacteria</taxon>
        <taxon>Bacillati</taxon>
        <taxon>Bacillota</taxon>
        <taxon>Bacilli</taxon>
        <taxon>Lactobacillales</taxon>
        <taxon>Lactobacillaceae</taxon>
        <taxon>Levilactobacillus</taxon>
    </lineage>
</organism>
<gene>
    <name evidence="1" type="primary">serS</name>
    <name type="ordered locus">LVIS_1710</name>
</gene>
<reference key="1">
    <citation type="journal article" date="2006" name="Proc. Natl. Acad. Sci. U.S.A.">
        <title>Comparative genomics of the lactic acid bacteria.</title>
        <authorList>
            <person name="Makarova K.S."/>
            <person name="Slesarev A."/>
            <person name="Wolf Y.I."/>
            <person name="Sorokin A."/>
            <person name="Mirkin B."/>
            <person name="Koonin E.V."/>
            <person name="Pavlov A."/>
            <person name="Pavlova N."/>
            <person name="Karamychev V."/>
            <person name="Polouchine N."/>
            <person name="Shakhova V."/>
            <person name="Grigoriev I."/>
            <person name="Lou Y."/>
            <person name="Rohksar D."/>
            <person name="Lucas S."/>
            <person name="Huang K."/>
            <person name="Goodstein D.M."/>
            <person name="Hawkins T."/>
            <person name="Plengvidhya V."/>
            <person name="Welker D."/>
            <person name="Hughes J."/>
            <person name="Goh Y."/>
            <person name="Benson A."/>
            <person name="Baldwin K."/>
            <person name="Lee J.-H."/>
            <person name="Diaz-Muniz I."/>
            <person name="Dosti B."/>
            <person name="Smeianov V."/>
            <person name="Wechter W."/>
            <person name="Barabote R."/>
            <person name="Lorca G."/>
            <person name="Altermann E."/>
            <person name="Barrangou R."/>
            <person name="Ganesan B."/>
            <person name="Xie Y."/>
            <person name="Rawsthorne H."/>
            <person name="Tamir D."/>
            <person name="Parker C."/>
            <person name="Breidt F."/>
            <person name="Broadbent J.R."/>
            <person name="Hutkins R."/>
            <person name="O'Sullivan D."/>
            <person name="Steele J."/>
            <person name="Unlu G."/>
            <person name="Saier M.H. Jr."/>
            <person name="Klaenhammer T."/>
            <person name="Richardson P."/>
            <person name="Kozyavkin S."/>
            <person name="Weimer B.C."/>
            <person name="Mills D.A."/>
        </authorList>
    </citation>
    <scope>NUCLEOTIDE SEQUENCE [LARGE SCALE GENOMIC DNA]</scope>
    <source>
        <strain>ATCC 367 / BCRC 12310 / CIP 105137 / JCM 1170 / LMG 11437 / NCIMB 947 / NCTC 947</strain>
    </source>
</reference>
<dbReference type="EC" id="6.1.1.11" evidence="1"/>
<dbReference type="EMBL" id="CP000416">
    <property type="protein sequence ID" value="ABJ64777.1"/>
    <property type="molecule type" value="Genomic_DNA"/>
</dbReference>
<dbReference type="RefSeq" id="WP_011668511.1">
    <property type="nucleotide sequence ID" value="NC_008497.1"/>
</dbReference>
<dbReference type="SMR" id="Q03PU5"/>
<dbReference type="STRING" id="387344.LVIS_1710"/>
<dbReference type="KEGG" id="lbr:LVIS_1710"/>
<dbReference type="PATRIC" id="fig|387344.15.peg.1616"/>
<dbReference type="eggNOG" id="COG0172">
    <property type="taxonomic scope" value="Bacteria"/>
</dbReference>
<dbReference type="HOGENOM" id="CLU_023797_1_1_9"/>
<dbReference type="UniPathway" id="UPA00906">
    <property type="reaction ID" value="UER00895"/>
</dbReference>
<dbReference type="Proteomes" id="UP000001652">
    <property type="component" value="Chromosome"/>
</dbReference>
<dbReference type="GO" id="GO:0005737">
    <property type="term" value="C:cytoplasm"/>
    <property type="evidence" value="ECO:0007669"/>
    <property type="project" value="UniProtKB-SubCell"/>
</dbReference>
<dbReference type="GO" id="GO:0005524">
    <property type="term" value="F:ATP binding"/>
    <property type="evidence" value="ECO:0007669"/>
    <property type="project" value="UniProtKB-UniRule"/>
</dbReference>
<dbReference type="GO" id="GO:0140096">
    <property type="term" value="F:catalytic activity, acting on a protein"/>
    <property type="evidence" value="ECO:0007669"/>
    <property type="project" value="UniProtKB-ARBA"/>
</dbReference>
<dbReference type="GO" id="GO:0004828">
    <property type="term" value="F:serine-tRNA ligase activity"/>
    <property type="evidence" value="ECO:0007669"/>
    <property type="project" value="UniProtKB-UniRule"/>
</dbReference>
<dbReference type="GO" id="GO:0016740">
    <property type="term" value="F:transferase activity"/>
    <property type="evidence" value="ECO:0007669"/>
    <property type="project" value="UniProtKB-ARBA"/>
</dbReference>
<dbReference type="GO" id="GO:0016260">
    <property type="term" value="P:selenocysteine biosynthetic process"/>
    <property type="evidence" value="ECO:0007669"/>
    <property type="project" value="UniProtKB-UniRule"/>
</dbReference>
<dbReference type="GO" id="GO:0006434">
    <property type="term" value="P:seryl-tRNA aminoacylation"/>
    <property type="evidence" value="ECO:0007669"/>
    <property type="project" value="UniProtKB-UniRule"/>
</dbReference>
<dbReference type="CDD" id="cd00770">
    <property type="entry name" value="SerRS_core"/>
    <property type="match status" value="1"/>
</dbReference>
<dbReference type="Gene3D" id="3.30.930.10">
    <property type="entry name" value="Bira Bifunctional Protein, Domain 2"/>
    <property type="match status" value="1"/>
</dbReference>
<dbReference type="Gene3D" id="1.10.287.40">
    <property type="entry name" value="Serine-tRNA synthetase, tRNA binding domain"/>
    <property type="match status" value="1"/>
</dbReference>
<dbReference type="HAMAP" id="MF_00176">
    <property type="entry name" value="Ser_tRNA_synth_type1"/>
    <property type="match status" value="1"/>
</dbReference>
<dbReference type="InterPro" id="IPR002314">
    <property type="entry name" value="aa-tRNA-synt_IIb"/>
</dbReference>
<dbReference type="InterPro" id="IPR006195">
    <property type="entry name" value="aa-tRNA-synth_II"/>
</dbReference>
<dbReference type="InterPro" id="IPR045864">
    <property type="entry name" value="aa-tRNA-synth_II/BPL/LPL"/>
</dbReference>
<dbReference type="InterPro" id="IPR002317">
    <property type="entry name" value="Ser-tRNA-ligase_type_1"/>
</dbReference>
<dbReference type="InterPro" id="IPR015866">
    <property type="entry name" value="Ser-tRNA-synth_1_N"/>
</dbReference>
<dbReference type="InterPro" id="IPR042103">
    <property type="entry name" value="SerRS_1_N_sf"/>
</dbReference>
<dbReference type="InterPro" id="IPR033729">
    <property type="entry name" value="SerRS_core"/>
</dbReference>
<dbReference type="InterPro" id="IPR010978">
    <property type="entry name" value="tRNA-bd_arm"/>
</dbReference>
<dbReference type="NCBIfam" id="TIGR00414">
    <property type="entry name" value="serS"/>
    <property type="match status" value="1"/>
</dbReference>
<dbReference type="PANTHER" id="PTHR43697:SF1">
    <property type="entry name" value="SERINE--TRNA LIGASE"/>
    <property type="match status" value="1"/>
</dbReference>
<dbReference type="PANTHER" id="PTHR43697">
    <property type="entry name" value="SERYL-TRNA SYNTHETASE"/>
    <property type="match status" value="1"/>
</dbReference>
<dbReference type="Pfam" id="PF02403">
    <property type="entry name" value="Seryl_tRNA_N"/>
    <property type="match status" value="1"/>
</dbReference>
<dbReference type="Pfam" id="PF00587">
    <property type="entry name" value="tRNA-synt_2b"/>
    <property type="match status" value="1"/>
</dbReference>
<dbReference type="PIRSF" id="PIRSF001529">
    <property type="entry name" value="Ser-tRNA-synth_IIa"/>
    <property type="match status" value="1"/>
</dbReference>
<dbReference type="PRINTS" id="PR00981">
    <property type="entry name" value="TRNASYNTHSER"/>
</dbReference>
<dbReference type="SUPFAM" id="SSF55681">
    <property type="entry name" value="Class II aaRS and biotin synthetases"/>
    <property type="match status" value="1"/>
</dbReference>
<dbReference type="SUPFAM" id="SSF46589">
    <property type="entry name" value="tRNA-binding arm"/>
    <property type="match status" value="1"/>
</dbReference>
<dbReference type="PROSITE" id="PS50862">
    <property type="entry name" value="AA_TRNA_LIGASE_II"/>
    <property type="match status" value="1"/>
</dbReference>
<accession>Q03PU5</accession>
<keyword id="KW-0030">Aminoacyl-tRNA synthetase</keyword>
<keyword id="KW-0067">ATP-binding</keyword>
<keyword id="KW-0963">Cytoplasm</keyword>
<keyword id="KW-0436">Ligase</keyword>
<keyword id="KW-0547">Nucleotide-binding</keyword>
<keyword id="KW-0648">Protein biosynthesis</keyword>
<keyword id="KW-1185">Reference proteome</keyword>
<name>SYS_LEVBA</name>
<comment type="function">
    <text evidence="1">Catalyzes the attachment of serine to tRNA(Ser). Is also able to aminoacylate tRNA(Sec) with serine, to form the misacylated tRNA L-seryl-tRNA(Sec), which will be further converted into selenocysteinyl-tRNA(Sec).</text>
</comment>
<comment type="catalytic activity">
    <reaction evidence="1">
        <text>tRNA(Ser) + L-serine + ATP = L-seryl-tRNA(Ser) + AMP + diphosphate + H(+)</text>
        <dbReference type="Rhea" id="RHEA:12292"/>
        <dbReference type="Rhea" id="RHEA-COMP:9669"/>
        <dbReference type="Rhea" id="RHEA-COMP:9703"/>
        <dbReference type="ChEBI" id="CHEBI:15378"/>
        <dbReference type="ChEBI" id="CHEBI:30616"/>
        <dbReference type="ChEBI" id="CHEBI:33019"/>
        <dbReference type="ChEBI" id="CHEBI:33384"/>
        <dbReference type="ChEBI" id="CHEBI:78442"/>
        <dbReference type="ChEBI" id="CHEBI:78533"/>
        <dbReference type="ChEBI" id="CHEBI:456215"/>
        <dbReference type="EC" id="6.1.1.11"/>
    </reaction>
</comment>
<comment type="catalytic activity">
    <reaction evidence="1">
        <text>tRNA(Sec) + L-serine + ATP = L-seryl-tRNA(Sec) + AMP + diphosphate + H(+)</text>
        <dbReference type="Rhea" id="RHEA:42580"/>
        <dbReference type="Rhea" id="RHEA-COMP:9742"/>
        <dbReference type="Rhea" id="RHEA-COMP:10128"/>
        <dbReference type="ChEBI" id="CHEBI:15378"/>
        <dbReference type="ChEBI" id="CHEBI:30616"/>
        <dbReference type="ChEBI" id="CHEBI:33019"/>
        <dbReference type="ChEBI" id="CHEBI:33384"/>
        <dbReference type="ChEBI" id="CHEBI:78442"/>
        <dbReference type="ChEBI" id="CHEBI:78533"/>
        <dbReference type="ChEBI" id="CHEBI:456215"/>
        <dbReference type="EC" id="6.1.1.11"/>
    </reaction>
</comment>
<comment type="pathway">
    <text evidence="1">Aminoacyl-tRNA biosynthesis; selenocysteinyl-tRNA(Sec) biosynthesis; L-seryl-tRNA(Sec) from L-serine and tRNA(Sec): step 1/1.</text>
</comment>
<comment type="subunit">
    <text evidence="1">Homodimer. The tRNA molecule binds across the dimer.</text>
</comment>
<comment type="subcellular location">
    <subcellularLocation>
        <location evidence="1">Cytoplasm</location>
    </subcellularLocation>
</comment>
<comment type="domain">
    <text evidence="1">Consists of two distinct domains, a catalytic core and a N-terminal extension that is involved in tRNA binding.</text>
</comment>
<comment type="similarity">
    <text evidence="1">Belongs to the class-II aminoacyl-tRNA synthetase family. Type-1 seryl-tRNA synthetase subfamily.</text>
</comment>
<evidence type="ECO:0000255" key="1">
    <source>
        <dbReference type="HAMAP-Rule" id="MF_00176"/>
    </source>
</evidence>